<feature type="chain" id="PRO_0000100447" description="Phosphoribosylformylglycinamidine synthase subunit PurL">
    <location>
        <begin position="1"/>
        <end position="728"/>
    </location>
</feature>
<feature type="active site" evidence="1">
    <location>
        <position position="42"/>
    </location>
</feature>
<feature type="active site" description="Proton acceptor" evidence="1">
    <location>
        <position position="88"/>
    </location>
</feature>
<feature type="binding site" evidence="1">
    <location>
        <position position="45"/>
    </location>
    <ligand>
        <name>ATP</name>
        <dbReference type="ChEBI" id="CHEBI:30616"/>
    </ligand>
</feature>
<feature type="binding site" evidence="1">
    <location>
        <position position="84"/>
    </location>
    <ligand>
        <name>ATP</name>
        <dbReference type="ChEBI" id="CHEBI:30616"/>
    </ligand>
</feature>
<feature type="binding site" evidence="1">
    <location>
        <position position="86"/>
    </location>
    <ligand>
        <name>Mg(2+)</name>
        <dbReference type="ChEBI" id="CHEBI:18420"/>
        <label>1</label>
    </ligand>
</feature>
<feature type="binding site" evidence="1">
    <location>
        <begin position="87"/>
        <end position="90"/>
    </location>
    <ligand>
        <name>substrate</name>
    </ligand>
</feature>
<feature type="binding site" evidence="1">
    <location>
        <position position="109"/>
    </location>
    <ligand>
        <name>substrate</name>
    </ligand>
</feature>
<feature type="binding site" evidence="1">
    <location>
        <position position="110"/>
    </location>
    <ligand>
        <name>Mg(2+)</name>
        <dbReference type="ChEBI" id="CHEBI:18420"/>
        <label>2</label>
    </ligand>
</feature>
<feature type="binding site" evidence="1">
    <location>
        <position position="237"/>
    </location>
    <ligand>
        <name>substrate</name>
    </ligand>
</feature>
<feature type="binding site" evidence="1">
    <location>
        <position position="265"/>
    </location>
    <ligand>
        <name>Mg(2+)</name>
        <dbReference type="ChEBI" id="CHEBI:18420"/>
        <label>2</label>
    </ligand>
</feature>
<feature type="binding site" evidence="1">
    <location>
        <begin position="309"/>
        <end position="311"/>
    </location>
    <ligand>
        <name>substrate</name>
    </ligand>
</feature>
<feature type="binding site" evidence="1">
    <location>
        <position position="491"/>
    </location>
    <ligand>
        <name>ATP</name>
        <dbReference type="ChEBI" id="CHEBI:30616"/>
    </ligand>
</feature>
<feature type="binding site" evidence="1">
    <location>
        <position position="528"/>
    </location>
    <ligand>
        <name>ATP</name>
        <dbReference type="ChEBI" id="CHEBI:30616"/>
    </ligand>
</feature>
<feature type="binding site" evidence="1">
    <location>
        <position position="529"/>
    </location>
    <ligand>
        <name>Mg(2+)</name>
        <dbReference type="ChEBI" id="CHEBI:18420"/>
        <label>1</label>
    </ligand>
</feature>
<feature type="binding site" evidence="1">
    <location>
        <position position="531"/>
    </location>
    <ligand>
        <name>substrate</name>
    </ligand>
</feature>
<dbReference type="EC" id="6.3.5.3" evidence="1"/>
<dbReference type="EMBL" id="CP000025">
    <property type="protein sequence ID" value="AAW35366.1"/>
    <property type="molecule type" value="Genomic_DNA"/>
</dbReference>
<dbReference type="RefSeq" id="WP_011049819.1">
    <property type="nucleotide sequence ID" value="NC_003912.7"/>
</dbReference>
<dbReference type="SMR" id="Q5HUK4"/>
<dbReference type="KEGG" id="cjr:CJE1035"/>
<dbReference type="HOGENOM" id="CLU_003100_0_1_7"/>
<dbReference type="UniPathway" id="UPA00074">
    <property type="reaction ID" value="UER00128"/>
</dbReference>
<dbReference type="GO" id="GO:0005737">
    <property type="term" value="C:cytoplasm"/>
    <property type="evidence" value="ECO:0007669"/>
    <property type="project" value="UniProtKB-SubCell"/>
</dbReference>
<dbReference type="GO" id="GO:0005524">
    <property type="term" value="F:ATP binding"/>
    <property type="evidence" value="ECO:0007669"/>
    <property type="project" value="UniProtKB-UniRule"/>
</dbReference>
<dbReference type="GO" id="GO:0000287">
    <property type="term" value="F:magnesium ion binding"/>
    <property type="evidence" value="ECO:0007669"/>
    <property type="project" value="UniProtKB-UniRule"/>
</dbReference>
<dbReference type="GO" id="GO:0004642">
    <property type="term" value="F:phosphoribosylformylglycinamidine synthase activity"/>
    <property type="evidence" value="ECO:0007669"/>
    <property type="project" value="UniProtKB-UniRule"/>
</dbReference>
<dbReference type="GO" id="GO:0006189">
    <property type="term" value="P:'de novo' IMP biosynthetic process"/>
    <property type="evidence" value="ECO:0007669"/>
    <property type="project" value="UniProtKB-UniRule"/>
</dbReference>
<dbReference type="CDD" id="cd02203">
    <property type="entry name" value="PurL_repeat1"/>
    <property type="match status" value="1"/>
</dbReference>
<dbReference type="CDD" id="cd02204">
    <property type="entry name" value="PurL_repeat2"/>
    <property type="match status" value="1"/>
</dbReference>
<dbReference type="FunFam" id="3.30.1330.10:FF:000004">
    <property type="entry name" value="Phosphoribosylformylglycinamidine synthase subunit PurL"/>
    <property type="match status" value="1"/>
</dbReference>
<dbReference type="Gene3D" id="3.90.650.10">
    <property type="entry name" value="PurM-like C-terminal domain"/>
    <property type="match status" value="2"/>
</dbReference>
<dbReference type="Gene3D" id="3.30.1330.10">
    <property type="entry name" value="PurM-like, N-terminal domain"/>
    <property type="match status" value="2"/>
</dbReference>
<dbReference type="HAMAP" id="MF_00420">
    <property type="entry name" value="PurL_2"/>
    <property type="match status" value="1"/>
</dbReference>
<dbReference type="InterPro" id="IPR010074">
    <property type="entry name" value="PRibForGlyAmidine_synth_PurL"/>
</dbReference>
<dbReference type="InterPro" id="IPR041609">
    <property type="entry name" value="PurL_linker"/>
</dbReference>
<dbReference type="InterPro" id="IPR010918">
    <property type="entry name" value="PurM-like_C_dom"/>
</dbReference>
<dbReference type="InterPro" id="IPR036676">
    <property type="entry name" value="PurM-like_C_sf"/>
</dbReference>
<dbReference type="InterPro" id="IPR016188">
    <property type="entry name" value="PurM-like_N"/>
</dbReference>
<dbReference type="InterPro" id="IPR036921">
    <property type="entry name" value="PurM-like_N_sf"/>
</dbReference>
<dbReference type="NCBIfam" id="TIGR01736">
    <property type="entry name" value="FGAM_synth_II"/>
    <property type="match status" value="1"/>
</dbReference>
<dbReference type="NCBIfam" id="NF002290">
    <property type="entry name" value="PRK01213.1"/>
    <property type="match status" value="1"/>
</dbReference>
<dbReference type="PANTHER" id="PTHR43555">
    <property type="entry name" value="PHOSPHORIBOSYLFORMYLGLYCINAMIDINE SYNTHASE SUBUNIT PURL"/>
    <property type="match status" value="1"/>
</dbReference>
<dbReference type="PANTHER" id="PTHR43555:SF1">
    <property type="entry name" value="PHOSPHORIBOSYLFORMYLGLYCINAMIDINE SYNTHASE SUBUNIT PURL"/>
    <property type="match status" value="1"/>
</dbReference>
<dbReference type="Pfam" id="PF00586">
    <property type="entry name" value="AIRS"/>
    <property type="match status" value="2"/>
</dbReference>
<dbReference type="Pfam" id="PF02769">
    <property type="entry name" value="AIRS_C"/>
    <property type="match status" value="2"/>
</dbReference>
<dbReference type="Pfam" id="PF18072">
    <property type="entry name" value="FGAR-AT_linker"/>
    <property type="match status" value="1"/>
</dbReference>
<dbReference type="PIRSF" id="PIRSF001587">
    <property type="entry name" value="FGAM_synthase_II"/>
    <property type="match status" value="1"/>
</dbReference>
<dbReference type="SUPFAM" id="SSF56042">
    <property type="entry name" value="PurM C-terminal domain-like"/>
    <property type="match status" value="2"/>
</dbReference>
<dbReference type="SUPFAM" id="SSF55326">
    <property type="entry name" value="PurM N-terminal domain-like"/>
    <property type="match status" value="2"/>
</dbReference>
<protein>
    <recommendedName>
        <fullName evidence="1">Phosphoribosylformylglycinamidine synthase subunit PurL</fullName>
        <shortName evidence="1">FGAM synthase</shortName>
        <ecNumber evidence="1">6.3.5.3</ecNumber>
    </recommendedName>
    <alternativeName>
        <fullName evidence="1">Formylglycinamide ribonucleotide amidotransferase subunit II</fullName>
        <shortName evidence="1">FGAR amidotransferase II</shortName>
        <shortName evidence="1">FGAR-AT II</shortName>
    </alternativeName>
    <alternativeName>
        <fullName evidence="1">Glutamine amidotransferase PurL</fullName>
    </alternativeName>
    <alternativeName>
        <fullName evidence="1">Phosphoribosylformylglycinamidine synthase subunit II</fullName>
    </alternativeName>
</protein>
<organism>
    <name type="scientific">Campylobacter jejuni (strain RM1221)</name>
    <dbReference type="NCBI Taxonomy" id="195099"/>
    <lineage>
        <taxon>Bacteria</taxon>
        <taxon>Pseudomonadati</taxon>
        <taxon>Campylobacterota</taxon>
        <taxon>Epsilonproteobacteria</taxon>
        <taxon>Campylobacterales</taxon>
        <taxon>Campylobacteraceae</taxon>
        <taxon>Campylobacter</taxon>
    </lineage>
</organism>
<sequence>MDKETIKAHKISDEEYTQILEILGREPNLLELGVISAMWSEHCSYKSSKKYLNGFPTKAPWVIQGPGENAGVIDIGQGMAAVFKVESHNHPSFIEPFAGAATGVGGILRDVFTMGARVVAGLNSLKFGNIHNEKCSKHQKYLVKGVVNGISHYGNCMGVPTIGGECAFDECFNGNILVNAFALGVCKSEDIFYAKAEGVGNPVIYVGSKTGRDGLGGAVMASDSFNEESKSLRPTVQIGDPFSEKLLMEACLELFKTDYIVGIQDMGAAGLTSSSFEMAGRSGSGMKLYLDKTPIRESGMTPYELMLSESQERMLICAKKGYEDKVIEIFKKWDLDAVVIGEVTNTGKMELFWHDELVGLIPIEPLSEKAPILSRPISEPKYLSEIKDYKFELKLSIQELFIQMLQNENINNKAFIYDQFDSSVQTNTIKADGRLGASAIRIKENGASVAMAIECNSRLNYVNPKIGAALAVASAGRKVACTGAKPLAISDCLNYGNPQNPEVMWQFAQGCEGIKEACKELNTPVVSGNVSLYNETEGVSIYPSPTIVSVGVLEDANKTLKASFEKENLSVYLLGESLGEFGGSMVMKIQDKKVSGSLKELDYKAEIALWDLLYKANQNSLLECANSVGIGGIAMTLAKMFAISSVGANLTSGFDDEKMIFDESASRAIVGLSKENEEAFLNLAKEFGVKAYKLGVSTSQKHFKLDSIELSKAELDKLYFESFKEQIQ</sequence>
<keyword id="KW-0067">ATP-binding</keyword>
<keyword id="KW-0963">Cytoplasm</keyword>
<keyword id="KW-0436">Ligase</keyword>
<keyword id="KW-0460">Magnesium</keyword>
<keyword id="KW-0479">Metal-binding</keyword>
<keyword id="KW-0547">Nucleotide-binding</keyword>
<keyword id="KW-0658">Purine biosynthesis</keyword>
<accession>Q5HUK4</accession>
<reference key="1">
    <citation type="journal article" date="2005" name="PLoS Biol.">
        <title>Major structural differences and novel potential virulence mechanisms from the genomes of multiple Campylobacter species.</title>
        <authorList>
            <person name="Fouts D.E."/>
            <person name="Mongodin E.F."/>
            <person name="Mandrell R.E."/>
            <person name="Miller W.G."/>
            <person name="Rasko D.A."/>
            <person name="Ravel J."/>
            <person name="Brinkac L.M."/>
            <person name="DeBoy R.T."/>
            <person name="Parker C.T."/>
            <person name="Daugherty S.C."/>
            <person name="Dodson R.J."/>
            <person name="Durkin A.S."/>
            <person name="Madupu R."/>
            <person name="Sullivan S.A."/>
            <person name="Shetty J.U."/>
            <person name="Ayodeji M.A."/>
            <person name="Shvartsbeyn A."/>
            <person name="Schatz M.C."/>
            <person name="Badger J.H."/>
            <person name="Fraser C.M."/>
            <person name="Nelson K.E."/>
        </authorList>
    </citation>
    <scope>NUCLEOTIDE SEQUENCE [LARGE SCALE GENOMIC DNA]</scope>
    <source>
        <strain>RM1221</strain>
    </source>
</reference>
<comment type="function">
    <text evidence="1">Part of the phosphoribosylformylglycinamidine synthase complex involved in the purines biosynthetic pathway. Catalyzes the ATP-dependent conversion of formylglycinamide ribonucleotide (FGAR) and glutamine to yield formylglycinamidine ribonucleotide (FGAM) and glutamate. The FGAM synthase complex is composed of three subunits. PurQ produces an ammonia molecule by converting glutamine to glutamate. PurL transfers the ammonia molecule to FGAR to form FGAM in an ATP-dependent manner. PurS interacts with PurQ and PurL and is thought to assist in the transfer of the ammonia molecule from PurQ to PurL.</text>
</comment>
<comment type="catalytic activity">
    <reaction evidence="1">
        <text>N(2)-formyl-N(1)-(5-phospho-beta-D-ribosyl)glycinamide + L-glutamine + ATP + H2O = 2-formamido-N(1)-(5-O-phospho-beta-D-ribosyl)acetamidine + L-glutamate + ADP + phosphate + H(+)</text>
        <dbReference type="Rhea" id="RHEA:17129"/>
        <dbReference type="ChEBI" id="CHEBI:15377"/>
        <dbReference type="ChEBI" id="CHEBI:15378"/>
        <dbReference type="ChEBI" id="CHEBI:29985"/>
        <dbReference type="ChEBI" id="CHEBI:30616"/>
        <dbReference type="ChEBI" id="CHEBI:43474"/>
        <dbReference type="ChEBI" id="CHEBI:58359"/>
        <dbReference type="ChEBI" id="CHEBI:147286"/>
        <dbReference type="ChEBI" id="CHEBI:147287"/>
        <dbReference type="ChEBI" id="CHEBI:456216"/>
        <dbReference type="EC" id="6.3.5.3"/>
    </reaction>
</comment>
<comment type="pathway">
    <text evidence="1">Purine metabolism; IMP biosynthesis via de novo pathway; 5-amino-1-(5-phospho-D-ribosyl)imidazole from N(2)-formyl-N(1)-(5-phospho-D-ribosyl)glycinamide: step 1/2.</text>
</comment>
<comment type="subunit">
    <text evidence="1">Monomer. Part of the FGAM synthase complex composed of 1 PurL, 1 PurQ and 2 PurS subunits.</text>
</comment>
<comment type="subcellular location">
    <subcellularLocation>
        <location evidence="1">Cytoplasm</location>
    </subcellularLocation>
</comment>
<comment type="similarity">
    <text evidence="1">Belongs to the FGAMS family.</text>
</comment>
<name>PURL_CAMJR</name>
<proteinExistence type="inferred from homology"/>
<gene>
    <name evidence="1" type="primary">purL</name>
    <name type="ordered locus">CJE1035</name>
</gene>
<evidence type="ECO:0000255" key="1">
    <source>
        <dbReference type="HAMAP-Rule" id="MF_00420"/>
    </source>
</evidence>